<comment type="function">
    <text evidence="1">Catalyzes the pyruvoyl-dependent decarboxylation of aspartate to produce beta-alanine.</text>
</comment>
<comment type="catalytic activity">
    <reaction evidence="1">
        <text>L-aspartate + H(+) = beta-alanine + CO2</text>
        <dbReference type="Rhea" id="RHEA:19497"/>
        <dbReference type="ChEBI" id="CHEBI:15378"/>
        <dbReference type="ChEBI" id="CHEBI:16526"/>
        <dbReference type="ChEBI" id="CHEBI:29991"/>
        <dbReference type="ChEBI" id="CHEBI:57966"/>
        <dbReference type="EC" id="4.1.1.11"/>
    </reaction>
</comment>
<comment type="cofactor">
    <cofactor evidence="1">
        <name>pyruvate</name>
        <dbReference type="ChEBI" id="CHEBI:15361"/>
    </cofactor>
    <text evidence="1">Binds 1 pyruvoyl group covalently per subunit.</text>
</comment>
<comment type="pathway">
    <text evidence="1">Cofactor biosynthesis; (R)-pantothenate biosynthesis; beta-alanine from L-aspartate: step 1/1.</text>
</comment>
<comment type="subunit">
    <text evidence="1">Heterooctamer of four alpha and four beta subunits.</text>
</comment>
<comment type="subcellular location">
    <subcellularLocation>
        <location evidence="1">Cytoplasm</location>
    </subcellularLocation>
</comment>
<comment type="PTM">
    <text evidence="1">Is synthesized initially as an inactive proenzyme, which is activated by self-cleavage at a specific serine bond to produce a beta-subunit with a hydroxyl group at its C-terminus and an alpha-subunit with a pyruvoyl group at its N-terminus.</text>
</comment>
<comment type="similarity">
    <text evidence="1">Belongs to the PanD family.</text>
</comment>
<sequence>MLRTMLKSKIHRATVTQAYLHYVGSVTIDADLMGAADLLEGEQVTIVDINNGARLVTYAIAGERGTGVIGINGAAAHLVHPGDLVILISYGTMEDAEAHAYQPRIVFVDADNKPIDLGHDPGSVPLDISVAAELFDPRIGAR</sequence>
<keyword id="KW-0068">Autocatalytic cleavage</keyword>
<keyword id="KW-0963">Cytoplasm</keyword>
<keyword id="KW-0210">Decarboxylase</keyword>
<keyword id="KW-0456">Lyase</keyword>
<keyword id="KW-0566">Pantothenate biosynthesis</keyword>
<keyword id="KW-0670">Pyruvate</keyword>
<keyword id="KW-0704">Schiff base</keyword>
<keyword id="KW-0865">Zymogen</keyword>
<reference key="1">
    <citation type="journal article" date="2009" name="Nat. Genet.">
        <title>Comparative genomic and phylogeographic analysis of Mycobacterium leprae.</title>
        <authorList>
            <person name="Monot M."/>
            <person name="Honore N."/>
            <person name="Garnier T."/>
            <person name="Zidane N."/>
            <person name="Sherafi D."/>
            <person name="Paniz-Mondolfi A."/>
            <person name="Matsuoka M."/>
            <person name="Taylor G.M."/>
            <person name="Donoghue H.D."/>
            <person name="Bouwman A."/>
            <person name="Mays S."/>
            <person name="Watson C."/>
            <person name="Lockwood D."/>
            <person name="Khamispour A."/>
            <person name="Dowlati Y."/>
            <person name="Jianping S."/>
            <person name="Rea T.H."/>
            <person name="Vera-Cabrera L."/>
            <person name="Stefani M.M."/>
            <person name="Banu S."/>
            <person name="Macdonald M."/>
            <person name="Sapkota B.R."/>
            <person name="Spencer J.S."/>
            <person name="Thomas J."/>
            <person name="Harshman K."/>
            <person name="Singh P."/>
            <person name="Busso P."/>
            <person name="Gattiker A."/>
            <person name="Rougemont J."/>
            <person name="Brennan P.J."/>
            <person name="Cole S.T."/>
        </authorList>
    </citation>
    <scope>NUCLEOTIDE SEQUENCE [LARGE SCALE GENOMIC DNA]</scope>
    <source>
        <strain>Br4923</strain>
    </source>
</reference>
<name>PAND_MYCLB</name>
<gene>
    <name evidence="1" type="primary">panD</name>
    <name type="ordered locus">MLBr00231</name>
</gene>
<feature type="chain" id="PRO_1000192017" description="Aspartate 1-decarboxylase beta chain" evidence="1">
    <location>
        <begin position="1"/>
        <end position="24"/>
    </location>
</feature>
<feature type="chain" id="PRO_1000192018" description="Aspartate 1-decarboxylase alpha chain" evidence="1">
    <location>
        <begin position="25"/>
        <end position="142"/>
    </location>
</feature>
<feature type="active site" description="Schiff-base intermediate with substrate; via pyruvic acid" evidence="1">
    <location>
        <position position="25"/>
    </location>
</feature>
<feature type="active site" description="Proton donor" evidence="1">
    <location>
        <position position="58"/>
    </location>
</feature>
<feature type="binding site" evidence="1">
    <location>
        <position position="57"/>
    </location>
    <ligand>
        <name>substrate</name>
    </ligand>
</feature>
<feature type="binding site" evidence="1">
    <location>
        <begin position="73"/>
        <end position="75"/>
    </location>
    <ligand>
        <name>substrate</name>
    </ligand>
</feature>
<feature type="modified residue" description="Pyruvic acid (Ser)" evidence="1">
    <location>
        <position position="25"/>
    </location>
</feature>
<organism>
    <name type="scientific">Mycobacterium leprae (strain Br4923)</name>
    <dbReference type="NCBI Taxonomy" id="561304"/>
    <lineage>
        <taxon>Bacteria</taxon>
        <taxon>Bacillati</taxon>
        <taxon>Actinomycetota</taxon>
        <taxon>Actinomycetes</taxon>
        <taxon>Mycobacteriales</taxon>
        <taxon>Mycobacteriaceae</taxon>
        <taxon>Mycobacterium</taxon>
    </lineage>
</organism>
<protein>
    <recommendedName>
        <fullName evidence="1">Aspartate 1-decarboxylase</fullName>
        <ecNumber evidence="1">4.1.1.11</ecNumber>
    </recommendedName>
    <alternativeName>
        <fullName evidence="1">Aspartate alpha-decarboxylase</fullName>
    </alternativeName>
    <component>
        <recommendedName>
            <fullName evidence="1">Aspartate 1-decarboxylase beta chain</fullName>
        </recommendedName>
    </component>
    <component>
        <recommendedName>
            <fullName evidence="1">Aspartate 1-decarboxylase alpha chain</fullName>
        </recommendedName>
    </component>
</protein>
<evidence type="ECO:0000255" key="1">
    <source>
        <dbReference type="HAMAP-Rule" id="MF_00446"/>
    </source>
</evidence>
<accession>B8ZU50</accession>
<proteinExistence type="inferred from homology"/>
<dbReference type="EC" id="4.1.1.11" evidence="1"/>
<dbReference type="EMBL" id="FM211192">
    <property type="protein sequence ID" value="CAR70324.1"/>
    <property type="molecule type" value="Genomic_DNA"/>
</dbReference>
<dbReference type="SMR" id="B8ZU50"/>
<dbReference type="KEGG" id="mlb:MLBr00231"/>
<dbReference type="HOGENOM" id="CLU_115305_2_0_11"/>
<dbReference type="UniPathway" id="UPA00028">
    <property type="reaction ID" value="UER00002"/>
</dbReference>
<dbReference type="Proteomes" id="UP000006900">
    <property type="component" value="Chromosome"/>
</dbReference>
<dbReference type="GO" id="GO:0005829">
    <property type="term" value="C:cytosol"/>
    <property type="evidence" value="ECO:0007669"/>
    <property type="project" value="TreeGrafter"/>
</dbReference>
<dbReference type="GO" id="GO:0004068">
    <property type="term" value="F:aspartate 1-decarboxylase activity"/>
    <property type="evidence" value="ECO:0007669"/>
    <property type="project" value="UniProtKB-UniRule"/>
</dbReference>
<dbReference type="GO" id="GO:0006523">
    <property type="term" value="P:alanine biosynthetic process"/>
    <property type="evidence" value="ECO:0007669"/>
    <property type="project" value="InterPro"/>
</dbReference>
<dbReference type="GO" id="GO:0015940">
    <property type="term" value="P:pantothenate biosynthetic process"/>
    <property type="evidence" value="ECO:0007669"/>
    <property type="project" value="UniProtKB-UniRule"/>
</dbReference>
<dbReference type="CDD" id="cd06919">
    <property type="entry name" value="Asp_decarbox"/>
    <property type="match status" value="1"/>
</dbReference>
<dbReference type="Gene3D" id="2.40.40.20">
    <property type="match status" value="1"/>
</dbReference>
<dbReference type="HAMAP" id="MF_00446">
    <property type="entry name" value="PanD"/>
    <property type="match status" value="1"/>
</dbReference>
<dbReference type="InterPro" id="IPR009010">
    <property type="entry name" value="Asp_de-COase-like_dom_sf"/>
</dbReference>
<dbReference type="InterPro" id="IPR003190">
    <property type="entry name" value="Asp_decarbox"/>
</dbReference>
<dbReference type="NCBIfam" id="TIGR00223">
    <property type="entry name" value="panD"/>
    <property type="match status" value="1"/>
</dbReference>
<dbReference type="PANTHER" id="PTHR21012">
    <property type="entry name" value="ASPARTATE 1-DECARBOXYLASE"/>
    <property type="match status" value="1"/>
</dbReference>
<dbReference type="PANTHER" id="PTHR21012:SF0">
    <property type="entry name" value="ASPARTATE 1-DECARBOXYLASE"/>
    <property type="match status" value="1"/>
</dbReference>
<dbReference type="Pfam" id="PF02261">
    <property type="entry name" value="Asp_decarbox"/>
    <property type="match status" value="1"/>
</dbReference>
<dbReference type="PIRSF" id="PIRSF006246">
    <property type="entry name" value="Asp_decarbox"/>
    <property type="match status" value="1"/>
</dbReference>
<dbReference type="SUPFAM" id="SSF50692">
    <property type="entry name" value="ADC-like"/>
    <property type="match status" value="1"/>
</dbReference>